<evidence type="ECO:0000255" key="1">
    <source>
        <dbReference type="PROSITE-ProRule" id="PRU00433"/>
    </source>
</evidence>
<evidence type="ECO:0000269" key="2">
    <source>
    </source>
</evidence>
<evidence type="ECO:0000305" key="3"/>
<organism>
    <name type="scientific">Gallus gallus</name>
    <name type="common">Chicken</name>
    <dbReference type="NCBI Taxonomy" id="9031"/>
    <lineage>
        <taxon>Eukaryota</taxon>
        <taxon>Metazoa</taxon>
        <taxon>Chordata</taxon>
        <taxon>Craniata</taxon>
        <taxon>Vertebrata</taxon>
        <taxon>Euteleostomi</taxon>
        <taxon>Archelosauria</taxon>
        <taxon>Archosauria</taxon>
        <taxon>Dinosauria</taxon>
        <taxon>Saurischia</taxon>
        <taxon>Theropoda</taxon>
        <taxon>Coelurosauria</taxon>
        <taxon>Aves</taxon>
        <taxon>Neognathae</taxon>
        <taxon>Galloanserae</taxon>
        <taxon>Galliformes</taxon>
        <taxon>Phasianidae</taxon>
        <taxon>Phasianinae</taxon>
        <taxon>Gallus</taxon>
    </lineage>
</organism>
<dbReference type="EMBL" id="K02303">
    <property type="protein sequence ID" value="AAA48741.1"/>
    <property type="molecule type" value="Genomic_DNA"/>
</dbReference>
<dbReference type="EMBL" id="X00230">
    <property type="protein sequence ID" value="CAA25046.1"/>
    <property type="molecule type" value="Genomic_DNA"/>
</dbReference>
<dbReference type="PIR" id="A00014">
    <property type="entry name" value="CCCH"/>
</dbReference>
<dbReference type="RefSeq" id="NP_001072946.1">
    <property type="nucleotide sequence ID" value="NM_001079478.1"/>
</dbReference>
<dbReference type="RefSeq" id="XP_015136937.1">
    <property type="nucleotide sequence ID" value="XM_015281451.1"/>
</dbReference>
<dbReference type="RefSeq" id="XP_015136938.1">
    <property type="nucleotide sequence ID" value="XM_015281452.1"/>
</dbReference>
<dbReference type="RefSeq" id="XP_015136939.1">
    <property type="nucleotide sequence ID" value="XM_015281453.1"/>
</dbReference>
<dbReference type="SMR" id="P67881"/>
<dbReference type="FunCoup" id="P67881">
    <property type="interactions" value="2457"/>
</dbReference>
<dbReference type="STRING" id="9031.ENSGALP00000017934"/>
<dbReference type="iPTMnet" id="P67881"/>
<dbReference type="PaxDb" id="9031-ENSGALP00000017934"/>
<dbReference type="Ensembl" id="ENSGALT00010005531.1">
    <property type="protein sequence ID" value="ENSGALP00010003370.1"/>
    <property type="gene ID" value="ENSGALG00010002409.1"/>
</dbReference>
<dbReference type="GeneID" id="420624"/>
<dbReference type="KEGG" id="gga:420624"/>
<dbReference type="CTD" id="54205"/>
<dbReference type="VEuPathDB" id="HostDB:geneid_420624"/>
<dbReference type="eggNOG" id="KOG3453">
    <property type="taxonomic scope" value="Eukaryota"/>
</dbReference>
<dbReference type="GeneTree" id="ENSGT00390000009405"/>
<dbReference type="HOGENOM" id="CLU_060944_3_0_1"/>
<dbReference type="InParanoid" id="P67881"/>
<dbReference type="OMA" id="KARCAQC"/>
<dbReference type="OrthoDB" id="449280at2759"/>
<dbReference type="PhylomeDB" id="P67881"/>
<dbReference type="Reactome" id="R-GGA-111457">
    <property type="pathway name" value="Release of apoptotic factors from the mitochondria"/>
</dbReference>
<dbReference type="Reactome" id="R-GGA-111458">
    <property type="pathway name" value="Formation of apoptosome"/>
</dbReference>
<dbReference type="Reactome" id="R-GGA-111459">
    <property type="pathway name" value="Activation of caspases through apoptosome-mediated cleavage"/>
</dbReference>
<dbReference type="Reactome" id="R-GGA-2151201">
    <property type="pathway name" value="Transcriptional activation of mitochondrial biogenesis"/>
</dbReference>
<dbReference type="Reactome" id="R-GGA-3299685">
    <property type="pathway name" value="Detoxification of Reactive Oxygen Species"/>
</dbReference>
<dbReference type="Reactome" id="R-GGA-5620971">
    <property type="pathway name" value="Pyroptosis"/>
</dbReference>
<dbReference type="Reactome" id="R-GGA-5628897">
    <property type="pathway name" value="TP53 Regulates Metabolic Genes"/>
</dbReference>
<dbReference type="Reactome" id="R-GGA-611105">
    <property type="pathway name" value="Respiratory electron transport"/>
</dbReference>
<dbReference type="Reactome" id="R-GGA-9627069">
    <property type="pathway name" value="Regulation of the apoptosome activity"/>
</dbReference>
<dbReference type="Reactome" id="R-GGA-9707564">
    <property type="pathway name" value="Cytoprotection by HMOX1"/>
</dbReference>
<dbReference type="PRO" id="PR:P67881"/>
<dbReference type="Proteomes" id="UP000000539">
    <property type="component" value="Chromosome 2"/>
</dbReference>
<dbReference type="Bgee" id="ENSGALG00000011020">
    <property type="expression patterns" value="Expressed in heart and 14 other cell types or tissues"/>
</dbReference>
<dbReference type="GO" id="GO:0005737">
    <property type="term" value="C:cytoplasm"/>
    <property type="evidence" value="ECO:0000314"/>
    <property type="project" value="AgBase"/>
</dbReference>
<dbReference type="GO" id="GO:0005758">
    <property type="term" value="C:mitochondrial intermembrane space"/>
    <property type="evidence" value="ECO:0000318"/>
    <property type="project" value="GO_Central"/>
</dbReference>
<dbReference type="GO" id="GO:0005739">
    <property type="term" value="C:mitochondrion"/>
    <property type="evidence" value="ECO:0000314"/>
    <property type="project" value="AgBase"/>
</dbReference>
<dbReference type="GO" id="GO:0009055">
    <property type="term" value="F:electron transfer activity"/>
    <property type="evidence" value="ECO:0000318"/>
    <property type="project" value="GO_Central"/>
</dbReference>
<dbReference type="GO" id="GO:0020037">
    <property type="term" value="F:heme binding"/>
    <property type="evidence" value="ECO:0007669"/>
    <property type="project" value="InterPro"/>
</dbReference>
<dbReference type="GO" id="GO:0046872">
    <property type="term" value="F:metal ion binding"/>
    <property type="evidence" value="ECO:0007669"/>
    <property type="project" value="UniProtKB-KW"/>
</dbReference>
<dbReference type="GO" id="GO:0006123">
    <property type="term" value="P:mitochondrial electron transport, cytochrome c to oxygen"/>
    <property type="evidence" value="ECO:0000318"/>
    <property type="project" value="GO_Central"/>
</dbReference>
<dbReference type="GO" id="GO:0006122">
    <property type="term" value="P:mitochondrial electron transport, ubiquinol to cytochrome c"/>
    <property type="evidence" value="ECO:0000318"/>
    <property type="project" value="GO_Central"/>
</dbReference>
<dbReference type="FunFam" id="1.10.760.10:FF:000008">
    <property type="entry name" value="Cytochrome c"/>
    <property type="match status" value="1"/>
</dbReference>
<dbReference type="Gene3D" id="1.10.760.10">
    <property type="entry name" value="Cytochrome c-like domain"/>
    <property type="match status" value="1"/>
</dbReference>
<dbReference type="InterPro" id="IPR009056">
    <property type="entry name" value="Cyt_c-like_dom"/>
</dbReference>
<dbReference type="InterPro" id="IPR036909">
    <property type="entry name" value="Cyt_c-like_dom_sf"/>
</dbReference>
<dbReference type="InterPro" id="IPR002327">
    <property type="entry name" value="Cyt_c_1A/1B"/>
</dbReference>
<dbReference type="PANTHER" id="PTHR11961">
    <property type="entry name" value="CYTOCHROME C"/>
    <property type="match status" value="1"/>
</dbReference>
<dbReference type="Pfam" id="PF00034">
    <property type="entry name" value="Cytochrom_C"/>
    <property type="match status" value="1"/>
</dbReference>
<dbReference type="PRINTS" id="PR00604">
    <property type="entry name" value="CYTCHRMECIAB"/>
</dbReference>
<dbReference type="SUPFAM" id="SSF46626">
    <property type="entry name" value="Cytochrome c"/>
    <property type="match status" value="1"/>
</dbReference>
<dbReference type="PROSITE" id="PS51007">
    <property type="entry name" value="CYTC"/>
    <property type="match status" value="1"/>
</dbReference>
<feature type="initiator methionine" description="Removed" evidence="2">
    <location>
        <position position="1"/>
    </location>
</feature>
<feature type="chain" id="PRO_0000108239" description="Cytochrome c">
    <location>
        <begin position="2"/>
        <end position="105"/>
    </location>
</feature>
<feature type="binding site" description="covalent" evidence="1 2">
    <location>
        <position position="15"/>
    </location>
    <ligand>
        <name>heme c</name>
        <dbReference type="ChEBI" id="CHEBI:61717"/>
    </ligand>
</feature>
<feature type="binding site" description="covalent" evidence="1 2">
    <location>
        <position position="18"/>
    </location>
    <ligand>
        <name>heme c</name>
        <dbReference type="ChEBI" id="CHEBI:61717"/>
    </ligand>
</feature>
<feature type="binding site" description="axial binding residue">
    <location>
        <position position="19"/>
    </location>
    <ligand>
        <name>heme c</name>
        <dbReference type="ChEBI" id="CHEBI:61717"/>
    </ligand>
    <ligandPart>
        <name>Fe</name>
        <dbReference type="ChEBI" id="CHEBI:18248"/>
    </ligandPart>
</feature>
<feature type="binding site" description="axial binding residue">
    <location>
        <position position="81"/>
    </location>
    <ligand>
        <name>heme c</name>
        <dbReference type="ChEBI" id="CHEBI:61717"/>
    </ligand>
    <ligandPart>
        <name>Fe</name>
        <dbReference type="ChEBI" id="CHEBI:18248"/>
    </ligandPart>
</feature>
<feature type="modified residue" description="N-acetylglycine" evidence="2">
    <location>
        <position position="2"/>
    </location>
</feature>
<name>CYC_CHICK</name>
<comment type="function">
    <text>Electron carrier protein. The oxidized form of the cytochrome c heme group can accept an electron from the heme group of the cytochrome c1 subunit of cytochrome reductase. Cytochrome c then transfers this electron to the cytochrome oxidase complex, the final protein carrier in the mitochondrial electron-transport chain.</text>
</comment>
<comment type="subcellular location">
    <subcellularLocation>
        <location>Mitochondrion intermembrane space</location>
    </subcellularLocation>
    <text>Loosely associated with the inner membrane.</text>
</comment>
<comment type="PTM">
    <text>Binds 1 heme c group covalently per subunit.</text>
</comment>
<comment type="similarity">
    <text evidence="3">Belongs to the cytochrome c family.</text>
</comment>
<comment type="online information" name="Protein Spotlight">
    <link uri="https://www.proteinspotlight.org/back_issues/076"/>
    <text>Life shuttle - Issue 76 of November 2006</text>
</comment>
<accession>P67881</accession>
<accession>P00016</accession>
<accession>Q9PRU4</accession>
<protein>
    <recommendedName>
        <fullName>Cytochrome c</fullName>
    </recommendedName>
</protein>
<proteinExistence type="evidence at protein level"/>
<sequence>MGDIEKGKKIFVQKCSQCHTVEKGGKHKTGPNLHGLFGRKTGQAEGFSYTDANKNKGITWGEDTLMEYLENPKKYIPGTKMIFAGIKKKSERVDLIAYLKDATSK</sequence>
<keyword id="KW-0007">Acetylation</keyword>
<keyword id="KW-0903">Direct protein sequencing</keyword>
<keyword id="KW-0249">Electron transport</keyword>
<keyword id="KW-0349">Heme</keyword>
<keyword id="KW-0408">Iron</keyword>
<keyword id="KW-0479">Metal-binding</keyword>
<keyword id="KW-0496">Mitochondrion</keyword>
<keyword id="KW-1185">Reference proteome</keyword>
<keyword id="KW-0679">Respiratory chain</keyword>
<keyword id="KW-0813">Transport</keyword>
<reference key="1">
    <citation type="journal article" date="1983" name="Nucleic Acids Res.">
        <title>Isolation and characterization of two alleles of the chicken cytochrome c gene.</title>
        <authorList>
            <person name="Limbach K.J."/>
            <person name="Wu R."/>
        </authorList>
    </citation>
    <scope>NUCLEOTIDE SEQUENCE [GENOMIC DNA]</scope>
</reference>
<reference key="2">
    <citation type="journal article" date="1966" name="J. Biol. Chem.">
        <title>Amino acid sequence of chicken heart cytochrome c.</title>
        <authorList>
            <person name="Chan S.K."/>
            <person name="Margoliash E."/>
        </authorList>
    </citation>
    <scope>PROTEIN SEQUENCE OF 2-105</scope>
    <scope>ACETYLATION AT GLY-2</scope>
    <source>
        <tissue>Heart</tissue>
    </source>
</reference>
<gene>
    <name type="primary">CYC</name>
</gene>